<feature type="chain" id="PRO_0000358548" description="NAD(P)H-quinone oxidoreductase subunit K, chloroplastic">
    <location>
        <begin position="1"/>
        <end position="225"/>
    </location>
</feature>
<feature type="binding site" evidence="1">
    <location>
        <position position="43"/>
    </location>
    <ligand>
        <name>[4Fe-4S] cluster</name>
        <dbReference type="ChEBI" id="CHEBI:49883"/>
    </ligand>
</feature>
<feature type="binding site" evidence="1">
    <location>
        <position position="44"/>
    </location>
    <ligand>
        <name>[4Fe-4S] cluster</name>
        <dbReference type="ChEBI" id="CHEBI:49883"/>
    </ligand>
</feature>
<feature type="binding site" evidence="1">
    <location>
        <position position="108"/>
    </location>
    <ligand>
        <name>[4Fe-4S] cluster</name>
        <dbReference type="ChEBI" id="CHEBI:49883"/>
    </ligand>
</feature>
<feature type="binding site" evidence="1">
    <location>
        <position position="139"/>
    </location>
    <ligand>
        <name>[4Fe-4S] cluster</name>
        <dbReference type="ChEBI" id="CHEBI:49883"/>
    </ligand>
</feature>
<comment type="function">
    <text evidence="1">NDH shuttles electrons from NAD(P)H:plastoquinone, via FMN and iron-sulfur (Fe-S) centers, to quinones in the photosynthetic chain and possibly in a chloroplast respiratory chain. The immediate electron acceptor for the enzyme in this species is believed to be plastoquinone. Couples the redox reaction to proton translocation, and thus conserves the redox energy in a proton gradient.</text>
</comment>
<comment type="catalytic activity">
    <reaction evidence="1">
        <text>a plastoquinone + NADH + (n+1) H(+)(in) = a plastoquinol + NAD(+) + n H(+)(out)</text>
        <dbReference type="Rhea" id="RHEA:42608"/>
        <dbReference type="Rhea" id="RHEA-COMP:9561"/>
        <dbReference type="Rhea" id="RHEA-COMP:9562"/>
        <dbReference type="ChEBI" id="CHEBI:15378"/>
        <dbReference type="ChEBI" id="CHEBI:17757"/>
        <dbReference type="ChEBI" id="CHEBI:57540"/>
        <dbReference type="ChEBI" id="CHEBI:57945"/>
        <dbReference type="ChEBI" id="CHEBI:62192"/>
    </reaction>
</comment>
<comment type="catalytic activity">
    <reaction evidence="1">
        <text>a plastoquinone + NADPH + (n+1) H(+)(in) = a plastoquinol + NADP(+) + n H(+)(out)</text>
        <dbReference type="Rhea" id="RHEA:42612"/>
        <dbReference type="Rhea" id="RHEA-COMP:9561"/>
        <dbReference type="Rhea" id="RHEA-COMP:9562"/>
        <dbReference type="ChEBI" id="CHEBI:15378"/>
        <dbReference type="ChEBI" id="CHEBI:17757"/>
        <dbReference type="ChEBI" id="CHEBI:57783"/>
        <dbReference type="ChEBI" id="CHEBI:58349"/>
        <dbReference type="ChEBI" id="CHEBI:62192"/>
    </reaction>
</comment>
<comment type="cofactor">
    <cofactor evidence="1">
        <name>[4Fe-4S] cluster</name>
        <dbReference type="ChEBI" id="CHEBI:49883"/>
    </cofactor>
    <text evidence="1">Binds 1 [4Fe-4S] cluster.</text>
</comment>
<comment type="subunit">
    <text evidence="1">NDH is composed of at least 16 different subunits, 5 of which are encoded in the nucleus.</text>
</comment>
<comment type="subcellular location">
    <subcellularLocation>
        <location evidence="1">Plastid</location>
        <location evidence="1">Chloroplast thylakoid membrane</location>
        <topology evidence="1">Peripheral membrane protein</topology>
        <orientation evidence="1">Stromal side</orientation>
    </subcellularLocation>
</comment>
<comment type="similarity">
    <text evidence="1">Belongs to the complex I 20 kDa subunit family.</text>
</comment>
<protein>
    <recommendedName>
        <fullName evidence="1">NAD(P)H-quinone oxidoreductase subunit K, chloroplastic</fullName>
        <ecNumber evidence="1">7.1.1.-</ecNumber>
    </recommendedName>
    <alternativeName>
        <fullName evidence="1">NAD(P)H dehydrogenase subunit K</fullName>
    </alternativeName>
    <alternativeName>
        <fullName evidence="1">NADH-plastoquinone oxidoreductase subunit K</fullName>
    </alternativeName>
</protein>
<gene>
    <name evidence="1" type="primary">ndhK</name>
</gene>
<keyword id="KW-0004">4Fe-4S</keyword>
<keyword id="KW-0150">Chloroplast</keyword>
<keyword id="KW-0408">Iron</keyword>
<keyword id="KW-0411">Iron-sulfur</keyword>
<keyword id="KW-0472">Membrane</keyword>
<keyword id="KW-0479">Metal-binding</keyword>
<keyword id="KW-0520">NAD</keyword>
<keyword id="KW-0521">NADP</keyword>
<keyword id="KW-0934">Plastid</keyword>
<keyword id="KW-0618">Plastoquinone</keyword>
<keyword id="KW-0874">Quinone</keyword>
<keyword id="KW-0793">Thylakoid</keyword>
<keyword id="KW-1278">Translocase</keyword>
<keyword id="KW-0813">Transport</keyword>
<sequence>MNSIEFPLFHRTTQNSVISTTLNDLSNWSRLSSLWPLLYGTSCCFIEFASLIGSRFDFDRYGLVPRSSPRQADLILTAGTVTMKMAPSLVRLYEQMPEPKYVIAMGACTITGGMFSTDSYSTVRGVDKLIPVDVYLPGCPPKPEAIIDAITKLRKKISREIYPDRIMSQRENRCFTTNHKFQVGHSIHTGNYDQGFLYQPPSTSEIPPETFFKYKSSVSSHELVN</sequence>
<name>NDHK_HELAN</name>
<dbReference type="EC" id="7.1.1.-" evidence="1"/>
<dbReference type="EMBL" id="DQ383815">
    <property type="protein sequence ID" value="ABD47150.1"/>
    <property type="molecule type" value="Genomic_DNA"/>
</dbReference>
<dbReference type="RefSeq" id="YP_588121.1">
    <property type="nucleotide sequence ID" value="NC_007977.1"/>
</dbReference>
<dbReference type="SMR" id="Q1KXV5"/>
<dbReference type="EnsemblPlants" id="mRNA:HanXRQr2_Chr02g0061501">
    <property type="protein sequence ID" value="CDS:HanXRQr2_Chr02g0061501.1"/>
    <property type="gene ID" value="HanXRQr2_Chr02g0061501"/>
</dbReference>
<dbReference type="GeneID" id="4055702"/>
<dbReference type="Gramene" id="mRNA:HanXRQr2_Chr02g0061501">
    <property type="protein sequence ID" value="CDS:HanXRQr2_Chr02g0061501.1"/>
    <property type="gene ID" value="HanXRQr2_Chr02g0061501"/>
</dbReference>
<dbReference type="KEGG" id="han:4055702"/>
<dbReference type="OrthoDB" id="1889813at2759"/>
<dbReference type="GO" id="GO:0009535">
    <property type="term" value="C:chloroplast thylakoid membrane"/>
    <property type="evidence" value="ECO:0007669"/>
    <property type="project" value="UniProtKB-SubCell"/>
</dbReference>
<dbReference type="GO" id="GO:0051539">
    <property type="term" value="F:4 iron, 4 sulfur cluster binding"/>
    <property type="evidence" value="ECO:0007669"/>
    <property type="project" value="UniProtKB-KW"/>
</dbReference>
<dbReference type="GO" id="GO:0005506">
    <property type="term" value="F:iron ion binding"/>
    <property type="evidence" value="ECO:0007669"/>
    <property type="project" value="UniProtKB-UniRule"/>
</dbReference>
<dbReference type="GO" id="GO:0008137">
    <property type="term" value="F:NADH dehydrogenase (ubiquinone) activity"/>
    <property type="evidence" value="ECO:0007669"/>
    <property type="project" value="InterPro"/>
</dbReference>
<dbReference type="GO" id="GO:0048038">
    <property type="term" value="F:quinone binding"/>
    <property type="evidence" value="ECO:0007669"/>
    <property type="project" value="UniProtKB-KW"/>
</dbReference>
<dbReference type="GO" id="GO:0019684">
    <property type="term" value="P:photosynthesis, light reaction"/>
    <property type="evidence" value="ECO:0007669"/>
    <property type="project" value="UniProtKB-UniRule"/>
</dbReference>
<dbReference type="FunFam" id="3.40.50.12280:FF:000003">
    <property type="entry name" value="NAD(P)H-quinone oxidoreductase subunit K, chloroplastic"/>
    <property type="match status" value="1"/>
</dbReference>
<dbReference type="Gene3D" id="3.40.50.12280">
    <property type="match status" value="1"/>
</dbReference>
<dbReference type="HAMAP" id="MF_01356">
    <property type="entry name" value="NDH1_NuoB"/>
    <property type="match status" value="1"/>
</dbReference>
<dbReference type="InterPro" id="IPR006137">
    <property type="entry name" value="NADH_UbQ_OxRdtase-like_20kDa"/>
</dbReference>
<dbReference type="InterPro" id="IPR006138">
    <property type="entry name" value="NADH_UQ_OxRdtase_20Kd_su"/>
</dbReference>
<dbReference type="NCBIfam" id="TIGR01957">
    <property type="entry name" value="nuoB_fam"/>
    <property type="match status" value="1"/>
</dbReference>
<dbReference type="NCBIfam" id="NF005012">
    <property type="entry name" value="PRK06411.1"/>
    <property type="match status" value="1"/>
</dbReference>
<dbReference type="PANTHER" id="PTHR11995">
    <property type="entry name" value="NADH DEHYDROGENASE"/>
    <property type="match status" value="1"/>
</dbReference>
<dbReference type="PANTHER" id="PTHR11995:SF14">
    <property type="entry name" value="NADH DEHYDROGENASE [UBIQUINONE] IRON-SULFUR PROTEIN 7, MITOCHONDRIAL"/>
    <property type="match status" value="1"/>
</dbReference>
<dbReference type="Pfam" id="PF01058">
    <property type="entry name" value="Oxidored_q6"/>
    <property type="match status" value="1"/>
</dbReference>
<dbReference type="SUPFAM" id="SSF56770">
    <property type="entry name" value="HydA/Nqo6-like"/>
    <property type="match status" value="1"/>
</dbReference>
<dbReference type="PROSITE" id="PS01150">
    <property type="entry name" value="COMPLEX1_20K"/>
    <property type="match status" value="1"/>
</dbReference>
<reference key="1">
    <citation type="submission" date="2006-01" db="EMBL/GenBank/DDBJ databases">
        <title>A comparison of the first two published chloroplast genomes in Asteraceae: Lactuca and Helianthus.</title>
        <authorList>
            <person name="Timme R.E."/>
            <person name="Kuehl J.V."/>
            <person name="Boore J.L."/>
            <person name="Jansen R.K."/>
        </authorList>
    </citation>
    <scope>NUCLEOTIDE SEQUENCE [LARGE SCALE GENOMIC DNA]</scope>
    <source>
        <strain>cv. HA383</strain>
    </source>
</reference>
<geneLocation type="chloroplast"/>
<evidence type="ECO:0000255" key="1">
    <source>
        <dbReference type="HAMAP-Rule" id="MF_01356"/>
    </source>
</evidence>
<organism>
    <name type="scientific">Helianthus annuus</name>
    <name type="common">Common sunflower</name>
    <dbReference type="NCBI Taxonomy" id="4232"/>
    <lineage>
        <taxon>Eukaryota</taxon>
        <taxon>Viridiplantae</taxon>
        <taxon>Streptophyta</taxon>
        <taxon>Embryophyta</taxon>
        <taxon>Tracheophyta</taxon>
        <taxon>Spermatophyta</taxon>
        <taxon>Magnoliopsida</taxon>
        <taxon>eudicotyledons</taxon>
        <taxon>Gunneridae</taxon>
        <taxon>Pentapetalae</taxon>
        <taxon>asterids</taxon>
        <taxon>campanulids</taxon>
        <taxon>Asterales</taxon>
        <taxon>Asteraceae</taxon>
        <taxon>Asteroideae</taxon>
        <taxon>Heliantheae alliance</taxon>
        <taxon>Heliantheae</taxon>
        <taxon>Helianthus</taxon>
    </lineage>
</organism>
<accession>Q1KXV5</accession>
<proteinExistence type="inferred from homology"/>